<evidence type="ECO:0000255" key="1">
    <source>
        <dbReference type="HAMAP-Rule" id="MF_00098"/>
    </source>
</evidence>
<feature type="chain" id="PRO_0000331891" description="Methionine--tRNA ligase">
    <location>
        <begin position="1"/>
        <end position="572"/>
    </location>
</feature>
<feature type="short sequence motif" description="'HIGH' region">
    <location>
        <begin position="11"/>
        <end position="21"/>
    </location>
</feature>
<feature type="short sequence motif" description="'KMSKS' region">
    <location>
        <begin position="346"/>
        <end position="350"/>
    </location>
</feature>
<feature type="binding site" evidence="1">
    <location>
        <position position="143"/>
    </location>
    <ligand>
        <name>Zn(2+)</name>
        <dbReference type="ChEBI" id="CHEBI:29105"/>
    </ligand>
</feature>
<feature type="binding site" evidence="1">
    <location>
        <position position="146"/>
    </location>
    <ligand>
        <name>Zn(2+)</name>
        <dbReference type="ChEBI" id="CHEBI:29105"/>
    </ligand>
</feature>
<feature type="binding site" evidence="1">
    <location>
        <position position="156"/>
    </location>
    <ligand>
        <name>Zn(2+)</name>
        <dbReference type="ChEBI" id="CHEBI:29105"/>
    </ligand>
</feature>
<feature type="binding site" evidence="1">
    <location>
        <position position="159"/>
    </location>
    <ligand>
        <name>Zn(2+)</name>
        <dbReference type="ChEBI" id="CHEBI:29105"/>
    </ligand>
</feature>
<feature type="binding site" evidence="1">
    <location>
        <position position="349"/>
    </location>
    <ligand>
        <name>ATP</name>
        <dbReference type="ChEBI" id="CHEBI:30616"/>
    </ligand>
</feature>
<name>SYM_ROSDO</name>
<reference key="1">
    <citation type="journal article" date="2007" name="J. Bacteriol.">
        <title>The complete genome sequence of Roseobacter denitrificans reveals a mixotrophic rather than photosynthetic metabolism.</title>
        <authorList>
            <person name="Swingley W.D."/>
            <person name="Sadekar S."/>
            <person name="Mastrian S.D."/>
            <person name="Matthies H.J."/>
            <person name="Hao J."/>
            <person name="Ramos H."/>
            <person name="Acharya C.R."/>
            <person name="Conrad A.L."/>
            <person name="Taylor H.L."/>
            <person name="Dejesa L.C."/>
            <person name="Shah M.K."/>
            <person name="O'Huallachain M.E."/>
            <person name="Lince M.T."/>
            <person name="Blankenship R.E."/>
            <person name="Beatty J.T."/>
            <person name="Touchman J.W."/>
        </authorList>
    </citation>
    <scope>NUCLEOTIDE SEQUENCE [LARGE SCALE GENOMIC DNA]</scope>
    <source>
        <strain>ATCC 33942 / OCh 114</strain>
    </source>
</reference>
<keyword id="KW-0030">Aminoacyl-tRNA synthetase</keyword>
<keyword id="KW-0067">ATP-binding</keyword>
<keyword id="KW-0963">Cytoplasm</keyword>
<keyword id="KW-0436">Ligase</keyword>
<keyword id="KW-0479">Metal-binding</keyword>
<keyword id="KW-0547">Nucleotide-binding</keyword>
<keyword id="KW-0648">Protein biosynthesis</keyword>
<keyword id="KW-1185">Reference proteome</keyword>
<keyword id="KW-0862">Zinc</keyword>
<sequence>MERHLITSAIPYINGIKHLGNLVGSQLPADLYARYLRARGHEVLFLCATDEHGTPAELAAAKAGKPVDEYCAEMHAIQSEIAKGFRLSFDHFGRSSSAQNHRLTQHFAGKLDEANLIDEVIEKQVYSHADGRFLPDRYIEGTCPNCAYDKARGDQCENCTKQLDPTDLIEPRSAISGSTDLEVRETKHLYLKQSVLKDQLDAWIDSKTDWPVLTTSIAKKWLHDGDGLRDRGITRDLDWGIPVKKGTQDWPGMEGKVFYVWFDAPIEYIACASEWAEANNLEQSDWERWWRTDKGADDVRYTQFMGKDNVPFHTLSFPATLLGSGEPWKMVDHLKSFNYLNYDGGQFSTSQGRGIFMDQALELLPADYWRWWLLSHAPENSDSEFTWENFQSSVNKDLADVLGNFVSRITKFCAAKFGSEVPAGGAYGSAELELLTKLDESLTRYQDYMGAMEVRKSAQELRAIWASGNEYLQTVAPWSVFKTDPETAAMQTRLGLNLALLFGVLSSPFVPDASEKILKCLGHPSARWPDTCTDFVTSMKPGDPFEVPEVLFAKLTDEDRATYSAKFSGTQS</sequence>
<comment type="function">
    <text evidence="1">Is required not only for elongation of protein synthesis but also for the initiation of all mRNA translation through initiator tRNA(fMet) aminoacylation.</text>
</comment>
<comment type="catalytic activity">
    <reaction evidence="1">
        <text>tRNA(Met) + L-methionine + ATP = L-methionyl-tRNA(Met) + AMP + diphosphate</text>
        <dbReference type="Rhea" id="RHEA:13481"/>
        <dbReference type="Rhea" id="RHEA-COMP:9667"/>
        <dbReference type="Rhea" id="RHEA-COMP:9698"/>
        <dbReference type="ChEBI" id="CHEBI:30616"/>
        <dbReference type="ChEBI" id="CHEBI:33019"/>
        <dbReference type="ChEBI" id="CHEBI:57844"/>
        <dbReference type="ChEBI" id="CHEBI:78442"/>
        <dbReference type="ChEBI" id="CHEBI:78530"/>
        <dbReference type="ChEBI" id="CHEBI:456215"/>
        <dbReference type="EC" id="6.1.1.10"/>
    </reaction>
</comment>
<comment type="cofactor">
    <cofactor evidence="1">
        <name>Zn(2+)</name>
        <dbReference type="ChEBI" id="CHEBI:29105"/>
    </cofactor>
    <text evidence="1">Binds 1 zinc ion per subunit.</text>
</comment>
<comment type="subunit">
    <text evidence="1">Monomer.</text>
</comment>
<comment type="subcellular location">
    <subcellularLocation>
        <location evidence="1">Cytoplasm</location>
    </subcellularLocation>
</comment>
<comment type="similarity">
    <text evidence="1">Belongs to the class-I aminoacyl-tRNA synthetase family. MetG type 1 subfamily.</text>
</comment>
<dbReference type="EC" id="6.1.1.10" evidence="1"/>
<dbReference type="EMBL" id="CP000362">
    <property type="protein sequence ID" value="ABG32074.1"/>
    <property type="molecule type" value="Genomic_DNA"/>
</dbReference>
<dbReference type="RefSeq" id="WP_011568691.1">
    <property type="nucleotide sequence ID" value="NC_008209.1"/>
</dbReference>
<dbReference type="SMR" id="Q166L9"/>
<dbReference type="STRING" id="375451.RD1_2516"/>
<dbReference type="KEGG" id="rde:RD1_2516"/>
<dbReference type="eggNOG" id="COG0143">
    <property type="taxonomic scope" value="Bacteria"/>
</dbReference>
<dbReference type="HOGENOM" id="CLU_009710_3_2_5"/>
<dbReference type="OrthoDB" id="9810191at2"/>
<dbReference type="Proteomes" id="UP000007029">
    <property type="component" value="Chromosome"/>
</dbReference>
<dbReference type="GO" id="GO:0017101">
    <property type="term" value="C:aminoacyl-tRNA synthetase multienzyme complex"/>
    <property type="evidence" value="ECO:0007669"/>
    <property type="project" value="TreeGrafter"/>
</dbReference>
<dbReference type="GO" id="GO:0005829">
    <property type="term" value="C:cytosol"/>
    <property type="evidence" value="ECO:0007669"/>
    <property type="project" value="TreeGrafter"/>
</dbReference>
<dbReference type="GO" id="GO:0005524">
    <property type="term" value="F:ATP binding"/>
    <property type="evidence" value="ECO:0007669"/>
    <property type="project" value="UniProtKB-UniRule"/>
</dbReference>
<dbReference type="GO" id="GO:0046872">
    <property type="term" value="F:metal ion binding"/>
    <property type="evidence" value="ECO:0007669"/>
    <property type="project" value="UniProtKB-KW"/>
</dbReference>
<dbReference type="GO" id="GO:0004825">
    <property type="term" value="F:methionine-tRNA ligase activity"/>
    <property type="evidence" value="ECO:0007669"/>
    <property type="project" value="UniProtKB-UniRule"/>
</dbReference>
<dbReference type="GO" id="GO:0006431">
    <property type="term" value="P:methionyl-tRNA aminoacylation"/>
    <property type="evidence" value="ECO:0007669"/>
    <property type="project" value="UniProtKB-UniRule"/>
</dbReference>
<dbReference type="CDD" id="cd07957">
    <property type="entry name" value="Anticodon_Ia_Met"/>
    <property type="match status" value="1"/>
</dbReference>
<dbReference type="CDD" id="cd00814">
    <property type="entry name" value="MetRS_core"/>
    <property type="match status" value="1"/>
</dbReference>
<dbReference type="FunFam" id="2.20.28.20:FF:000001">
    <property type="entry name" value="Methionine--tRNA ligase"/>
    <property type="match status" value="1"/>
</dbReference>
<dbReference type="Gene3D" id="3.40.50.620">
    <property type="entry name" value="HUPs"/>
    <property type="match status" value="1"/>
</dbReference>
<dbReference type="Gene3D" id="1.10.730.10">
    <property type="entry name" value="Isoleucyl-tRNA Synthetase, Domain 1"/>
    <property type="match status" value="1"/>
</dbReference>
<dbReference type="Gene3D" id="2.20.28.20">
    <property type="entry name" value="Methionyl-tRNA synthetase, Zn-domain"/>
    <property type="match status" value="1"/>
</dbReference>
<dbReference type="HAMAP" id="MF_00098">
    <property type="entry name" value="Met_tRNA_synth_type1"/>
    <property type="match status" value="1"/>
</dbReference>
<dbReference type="InterPro" id="IPR041872">
    <property type="entry name" value="Anticodon_Met"/>
</dbReference>
<dbReference type="InterPro" id="IPR023458">
    <property type="entry name" value="Met-tRNA_ligase_1"/>
</dbReference>
<dbReference type="InterPro" id="IPR014758">
    <property type="entry name" value="Met-tRNA_synth"/>
</dbReference>
<dbReference type="InterPro" id="IPR015413">
    <property type="entry name" value="Methionyl/Leucyl_tRNA_Synth"/>
</dbReference>
<dbReference type="InterPro" id="IPR033911">
    <property type="entry name" value="MetRS_core"/>
</dbReference>
<dbReference type="InterPro" id="IPR029038">
    <property type="entry name" value="MetRS_Zn"/>
</dbReference>
<dbReference type="InterPro" id="IPR014729">
    <property type="entry name" value="Rossmann-like_a/b/a_fold"/>
</dbReference>
<dbReference type="InterPro" id="IPR009080">
    <property type="entry name" value="tRNAsynth_Ia_anticodon-bd"/>
</dbReference>
<dbReference type="NCBIfam" id="TIGR00398">
    <property type="entry name" value="metG"/>
    <property type="match status" value="1"/>
</dbReference>
<dbReference type="PANTHER" id="PTHR45765">
    <property type="entry name" value="METHIONINE--TRNA LIGASE"/>
    <property type="match status" value="1"/>
</dbReference>
<dbReference type="PANTHER" id="PTHR45765:SF1">
    <property type="entry name" value="METHIONINE--TRNA LIGASE, CYTOPLASMIC"/>
    <property type="match status" value="1"/>
</dbReference>
<dbReference type="Pfam" id="PF19303">
    <property type="entry name" value="Anticodon_3"/>
    <property type="match status" value="1"/>
</dbReference>
<dbReference type="Pfam" id="PF09334">
    <property type="entry name" value="tRNA-synt_1g"/>
    <property type="match status" value="1"/>
</dbReference>
<dbReference type="PRINTS" id="PR01041">
    <property type="entry name" value="TRNASYNTHMET"/>
</dbReference>
<dbReference type="SUPFAM" id="SSF47323">
    <property type="entry name" value="Anticodon-binding domain of a subclass of class I aminoacyl-tRNA synthetases"/>
    <property type="match status" value="1"/>
</dbReference>
<dbReference type="SUPFAM" id="SSF57770">
    <property type="entry name" value="Methionyl-tRNA synthetase (MetRS), Zn-domain"/>
    <property type="match status" value="1"/>
</dbReference>
<dbReference type="SUPFAM" id="SSF52374">
    <property type="entry name" value="Nucleotidylyl transferase"/>
    <property type="match status" value="1"/>
</dbReference>
<organism>
    <name type="scientific">Roseobacter denitrificans (strain ATCC 33942 / OCh 114)</name>
    <name type="common">Erythrobacter sp. (strain OCh 114)</name>
    <name type="synonym">Roseobacter denitrificans</name>
    <dbReference type="NCBI Taxonomy" id="375451"/>
    <lineage>
        <taxon>Bacteria</taxon>
        <taxon>Pseudomonadati</taxon>
        <taxon>Pseudomonadota</taxon>
        <taxon>Alphaproteobacteria</taxon>
        <taxon>Rhodobacterales</taxon>
        <taxon>Roseobacteraceae</taxon>
        <taxon>Roseobacter</taxon>
    </lineage>
</organism>
<accession>Q166L9</accession>
<protein>
    <recommendedName>
        <fullName evidence="1">Methionine--tRNA ligase</fullName>
        <ecNumber evidence="1">6.1.1.10</ecNumber>
    </recommendedName>
    <alternativeName>
        <fullName evidence="1">Methionyl-tRNA synthetase</fullName>
        <shortName evidence="1">MetRS</shortName>
    </alternativeName>
</protein>
<gene>
    <name evidence="1" type="primary">metG</name>
    <name type="ordered locus">RD1_2516</name>
</gene>
<proteinExistence type="inferred from homology"/>